<reference key="1">
    <citation type="journal article" date="2002" name="Nature">
        <title>The genome sequence of Schizosaccharomyces pombe.</title>
        <authorList>
            <person name="Wood V."/>
            <person name="Gwilliam R."/>
            <person name="Rajandream M.A."/>
            <person name="Lyne M.H."/>
            <person name="Lyne R."/>
            <person name="Stewart A."/>
            <person name="Sgouros J.G."/>
            <person name="Peat N."/>
            <person name="Hayles J."/>
            <person name="Baker S.G."/>
            <person name="Basham D."/>
            <person name="Bowman S."/>
            <person name="Brooks K."/>
            <person name="Brown D."/>
            <person name="Brown S."/>
            <person name="Chillingworth T."/>
            <person name="Churcher C.M."/>
            <person name="Collins M."/>
            <person name="Connor R."/>
            <person name="Cronin A."/>
            <person name="Davis P."/>
            <person name="Feltwell T."/>
            <person name="Fraser A."/>
            <person name="Gentles S."/>
            <person name="Goble A."/>
            <person name="Hamlin N."/>
            <person name="Harris D.E."/>
            <person name="Hidalgo J."/>
            <person name="Hodgson G."/>
            <person name="Holroyd S."/>
            <person name="Hornsby T."/>
            <person name="Howarth S."/>
            <person name="Huckle E.J."/>
            <person name="Hunt S."/>
            <person name="Jagels K."/>
            <person name="James K.D."/>
            <person name="Jones L."/>
            <person name="Jones M."/>
            <person name="Leather S."/>
            <person name="McDonald S."/>
            <person name="McLean J."/>
            <person name="Mooney P."/>
            <person name="Moule S."/>
            <person name="Mungall K.L."/>
            <person name="Murphy L.D."/>
            <person name="Niblett D."/>
            <person name="Odell C."/>
            <person name="Oliver K."/>
            <person name="O'Neil S."/>
            <person name="Pearson D."/>
            <person name="Quail M.A."/>
            <person name="Rabbinowitsch E."/>
            <person name="Rutherford K.M."/>
            <person name="Rutter S."/>
            <person name="Saunders D."/>
            <person name="Seeger K."/>
            <person name="Sharp S."/>
            <person name="Skelton J."/>
            <person name="Simmonds M.N."/>
            <person name="Squares R."/>
            <person name="Squares S."/>
            <person name="Stevens K."/>
            <person name="Taylor K."/>
            <person name="Taylor R.G."/>
            <person name="Tivey A."/>
            <person name="Walsh S.V."/>
            <person name="Warren T."/>
            <person name="Whitehead S."/>
            <person name="Woodward J.R."/>
            <person name="Volckaert G."/>
            <person name="Aert R."/>
            <person name="Robben J."/>
            <person name="Grymonprez B."/>
            <person name="Weltjens I."/>
            <person name="Vanstreels E."/>
            <person name="Rieger M."/>
            <person name="Schaefer M."/>
            <person name="Mueller-Auer S."/>
            <person name="Gabel C."/>
            <person name="Fuchs M."/>
            <person name="Duesterhoeft A."/>
            <person name="Fritzc C."/>
            <person name="Holzer E."/>
            <person name="Moestl D."/>
            <person name="Hilbert H."/>
            <person name="Borzym K."/>
            <person name="Langer I."/>
            <person name="Beck A."/>
            <person name="Lehrach H."/>
            <person name="Reinhardt R."/>
            <person name="Pohl T.M."/>
            <person name="Eger P."/>
            <person name="Zimmermann W."/>
            <person name="Wedler H."/>
            <person name="Wambutt R."/>
            <person name="Purnelle B."/>
            <person name="Goffeau A."/>
            <person name="Cadieu E."/>
            <person name="Dreano S."/>
            <person name="Gloux S."/>
            <person name="Lelaure V."/>
            <person name="Mottier S."/>
            <person name="Galibert F."/>
            <person name="Aves S.J."/>
            <person name="Xiang Z."/>
            <person name="Hunt C."/>
            <person name="Moore K."/>
            <person name="Hurst S.M."/>
            <person name="Lucas M."/>
            <person name="Rochet M."/>
            <person name="Gaillardin C."/>
            <person name="Tallada V.A."/>
            <person name="Garzon A."/>
            <person name="Thode G."/>
            <person name="Daga R.R."/>
            <person name="Cruzado L."/>
            <person name="Jimenez J."/>
            <person name="Sanchez M."/>
            <person name="del Rey F."/>
            <person name="Benito J."/>
            <person name="Dominguez A."/>
            <person name="Revuelta J.L."/>
            <person name="Moreno S."/>
            <person name="Armstrong J."/>
            <person name="Forsburg S.L."/>
            <person name="Cerutti L."/>
            <person name="Lowe T."/>
            <person name="McCombie W.R."/>
            <person name="Paulsen I."/>
            <person name="Potashkin J."/>
            <person name="Shpakovski G.V."/>
            <person name="Ussery D."/>
            <person name="Barrell B.G."/>
            <person name="Nurse P."/>
        </authorList>
    </citation>
    <scope>NUCLEOTIDE SEQUENCE [LARGE SCALE GENOMIC DNA]</scope>
    <source>
        <strain>972 / ATCC 24843</strain>
    </source>
</reference>
<reference key="2">
    <citation type="journal article" date="2000" name="Genes Cells">
        <title>Large-scale screening of intracellular protein localization in living fission yeast cells by the use of a GFP-fusion genomic DNA library.</title>
        <authorList>
            <person name="Ding D.-Q."/>
            <person name="Tomita Y."/>
            <person name="Yamamoto A."/>
            <person name="Chikashige Y."/>
            <person name="Haraguchi T."/>
            <person name="Hiraoka Y."/>
        </authorList>
    </citation>
    <scope>NUCLEOTIDE SEQUENCE [LARGE SCALE GENOMIC DNA] OF 6-66</scope>
    <source>
        <strain>ATCC 38364 / 968</strain>
    </source>
</reference>
<reference key="3">
    <citation type="submission" date="1998-02" db="EMBL/GenBank/DDBJ databases">
        <title>S.pombe ribosomal protein S9 homolog.</title>
        <authorList>
            <person name="Kawamukai M."/>
        </authorList>
    </citation>
    <scope>NUCLEOTIDE SEQUENCE [MRNA] OF 8-191</scope>
</reference>
<reference key="4">
    <citation type="journal article" date="2006" name="Nat. Biotechnol.">
        <title>ORFeome cloning and global analysis of protein localization in the fission yeast Schizosaccharomyces pombe.</title>
        <authorList>
            <person name="Matsuyama A."/>
            <person name="Arai R."/>
            <person name="Yashiroda Y."/>
            <person name="Shirai A."/>
            <person name="Kamata A."/>
            <person name="Sekido S."/>
            <person name="Kobayashi Y."/>
            <person name="Hashimoto A."/>
            <person name="Hamamoto M."/>
            <person name="Hiraoka Y."/>
            <person name="Horinouchi S."/>
            <person name="Yoshida M."/>
        </authorList>
    </citation>
    <scope>SUBCELLULAR LOCATION [LARGE SCALE ANALYSIS]</scope>
</reference>
<reference key="5">
    <citation type="journal article" date="2008" name="J. Proteome Res.">
        <title>Phosphoproteome analysis of fission yeast.</title>
        <authorList>
            <person name="Wilson-Grady J.T."/>
            <person name="Villen J."/>
            <person name="Gygi S.P."/>
        </authorList>
    </citation>
    <scope>PHOSPHORYLATION [LARGE SCALE ANALYSIS] AT SER-50; SER-161; TYR-164 AND SER-179</scope>
    <scope>IDENTIFICATION BY MASS SPECTROMETRY</scope>
</reference>
<feature type="initiator methionine" description="Removed" evidence="1">
    <location>
        <position position="1"/>
    </location>
</feature>
<feature type="chain" id="PRO_0000132701" description="Small ribosomal subunit protein uS4A">
    <location>
        <begin position="2"/>
        <end position="191"/>
    </location>
</feature>
<feature type="domain" description="S4 RNA-binding" evidence="3">
    <location>
        <begin position="107"/>
        <end position="181"/>
    </location>
</feature>
<feature type="region of interest" description="Disordered" evidence="4">
    <location>
        <begin position="166"/>
        <end position="191"/>
    </location>
</feature>
<feature type="modified residue" description="Phosphoserine" evidence="6">
    <location>
        <position position="50"/>
    </location>
</feature>
<feature type="modified residue" description="Phosphoserine" evidence="6">
    <location>
        <position position="161"/>
    </location>
</feature>
<feature type="modified residue" description="Phosphotyrosine" evidence="6">
    <location>
        <position position="164"/>
    </location>
</feature>
<feature type="modified residue" description="Phosphoserine" evidence="6">
    <location>
        <position position="179"/>
    </location>
</feature>
<organism>
    <name type="scientific">Schizosaccharomyces pombe (strain 972 / ATCC 24843)</name>
    <name type="common">Fission yeast</name>
    <dbReference type="NCBI Taxonomy" id="284812"/>
    <lineage>
        <taxon>Eukaryota</taxon>
        <taxon>Fungi</taxon>
        <taxon>Dikarya</taxon>
        <taxon>Ascomycota</taxon>
        <taxon>Taphrinomycotina</taxon>
        <taxon>Schizosaccharomycetes</taxon>
        <taxon>Schizosaccharomycetales</taxon>
        <taxon>Schizosaccharomycetaceae</taxon>
        <taxon>Schizosaccharomyces</taxon>
    </lineage>
</organism>
<dbReference type="EMBL" id="CU329670">
    <property type="protein sequence ID" value="CAA90851.1"/>
    <property type="molecule type" value="Genomic_DNA"/>
</dbReference>
<dbReference type="EMBL" id="AB027929">
    <property type="protein sequence ID" value="BAA87233.1"/>
    <property type="molecule type" value="Genomic_DNA"/>
</dbReference>
<dbReference type="EMBL" id="AB011008">
    <property type="protein sequence ID" value="BAA24900.1"/>
    <property type="molecule type" value="mRNA"/>
</dbReference>
<dbReference type="PIR" id="S62409">
    <property type="entry name" value="S62409"/>
</dbReference>
<dbReference type="PIR" id="T43321">
    <property type="entry name" value="T43321"/>
</dbReference>
<dbReference type="RefSeq" id="NP_592945.1">
    <property type="nucleotide sequence ID" value="NM_001018346.2"/>
</dbReference>
<dbReference type="SMR" id="Q09757"/>
<dbReference type="BioGRID" id="279083">
    <property type="interactions" value="8"/>
</dbReference>
<dbReference type="FunCoup" id="Q09757">
    <property type="interactions" value="494"/>
</dbReference>
<dbReference type="STRING" id="284812.Q09757"/>
<dbReference type="iPTMnet" id="Q09757"/>
<dbReference type="PaxDb" id="4896-SPAC24H6.07.1"/>
<dbReference type="EnsemblFungi" id="SPAC24H6.07.1">
    <property type="protein sequence ID" value="SPAC24H6.07.1:pep"/>
    <property type="gene ID" value="SPAC24H6.07"/>
</dbReference>
<dbReference type="GeneID" id="2542629"/>
<dbReference type="KEGG" id="spo:2542629"/>
<dbReference type="PomBase" id="SPAC24H6.07">
    <property type="gene designation" value="rps901"/>
</dbReference>
<dbReference type="VEuPathDB" id="FungiDB:SPAC24H6.07"/>
<dbReference type="eggNOG" id="KOG3301">
    <property type="taxonomic scope" value="Eukaryota"/>
</dbReference>
<dbReference type="HOGENOM" id="CLU_089738_0_0_1"/>
<dbReference type="InParanoid" id="Q09757"/>
<dbReference type="OMA" id="WIFKNIT"/>
<dbReference type="PhylomeDB" id="Q09757"/>
<dbReference type="Reactome" id="R-SPO-156827">
    <property type="pathway name" value="L13a-mediated translational silencing of Ceruloplasmin expression"/>
</dbReference>
<dbReference type="Reactome" id="R-SPO-1799339">
    <property type="pathway name" value="SRP-dependent cotranslational protein targeting to membrane"/>
</dbReference>
<dbReference type="Reactome" id="R-SPO-6791226">
    <property type="pathway name" value="Major pathway of rRNA processing in the nucleolus and cytosol"/>
</dbReference>
<dbReference type="Reactome" id="R-SPO-72649">
    <property type="pathway name" value="Translation initiation complex formation"/>
</dbReference>
<dbReference type="Reactome" id="R-SPO-72689">
    <property type="pathway name" value="Formation of a pool of free 40S subunits"/>
</dbReference>
<dbReference type="Reactome" id="R-SPO-72695">
    <property type="pathway name" value="Formation of the ternary complex, and subsequently, the 43S complex"/>
</dbReference>
<dbReference type="Reactome" id="R-SPO-72702">
    <property type="pathway name" value="Ribosomal scanning and start codon recognition"/>
</dbReference>
<dbReference type="Reactome" id="R-SPO-72706">
    <property type="pathway name" value="GTP hydrolysis and joining of the 60S ribosomal subunit"/>
</dbReference>
<dbReference type="Reactome" id="R-SPO-975956">
    <property type="pathway name" value="Nonsense Mediated Decay (NMD) independent of the Exon Junction Complex (EJC)"/>
</dbReference>
<dbReference type="Reactome" id="R-SPO-975957">
    <property type="pathway name" value="Nonsense Mediated Decay (NMD) enhanced by the Exon Junction Complex (EJC)"/>
</dbReference>
<dbReference type="PRO" id="PR:Q09757"/>
<dbReference type="Proteomes" id="UP000002485">
    <property type="component" value="Chromosome I"/>
</dbReference>
<dbReference type="GO" id="GO:0010494">
    <property type="term" value="C:cytoplasmic stress granule"/>
    <property type="evidence" value="ECO:0000269"/>
    <property type="project" value="PomBase"/>
</dbReference>
<dbReference type="GO" id="GO:0005829">
    <property type="term" value="C:cytosol"/>
    <property type="evidence" value="ECO:0007005"/>
    <property type="project" value="PomBase"/>
</dbReference>
<dbReference type="GO" id="GO:0022627">
    <property type="term" value="C:cytosolic small ribosomal subunit"/>
    <property type="evidence" value="ECO:0000318"/>
    <property type="project" value="GO_Central"/>
</dbReference>
<dbReference type="GO" id="GO:0019843">
    <property type="term" value="F:rRNA binding"/>
    <property type="evidence" value="ECO:0000318"/>
    <property type="project" value="GO_Central"/>
</dbReference>
<dbReference type="GO" id="GO:0003735">
    <property type="term" value="F:structural constituent of ribosome"/>
    <property type="evidence" value="ECO:0000318"/>
    <property type="project" value="GO_Central"/>
</dbReference>
<dbReference type="GO" id="GO:0002181">
    <property type="term" value="P:cytoplasmic translation"/>
    <property type="evidence" value="ECO:0000266"/>
    <property type="project" value="PomBase"/>
</dbReference>
<dbReference type="GO" id="GO:0042274">
    <property type="term" value="P:ribosomal small subunit biogenesis"/>
    <property type="evidence" value="ECO:0000318"/>
    <property type="project" value="GO_Central"/>
</dbReference>
<dbReference type="CDD" id="cd00165">
    <property type="entry name" value="S4"/>
    <property type="match status" value="1"/>
</dbReference>
<dbReference type="FunFam" id="3.10.290.10:FF:000021">
    <property type="entry name" value="40S ribosomal protein S9"/>
    <property type="match status" value="1"/>
</dbReference>
<dbReference type="Gene3D" id="3.10.290.10">
    <property type="entry name" value="RNA-binding S4 domain"/>
    <property type="match status" value="1"/>
</dbReference>
<dbReference type="InterPro" id="IPR022801">
    <property type="entry name" value="Ribosomal_uS4"/>
</dbReference>
<dbReference type="InterPro" id="IPR018079">
    <property type="entry name" value="Ribosomal_uS4_CS"/>
</dbReference>
<dbReference type="InterPro" id="IPR005710">
    <property type="entry name" value="Ribosomal_uS4_euk/arc"/>
</dbReference>
<dbReference type="InterPro" id="IPR001912">
    <property type="entry name" value="Ribosomal_uS4_N"/>
</dbReference>
<dbReference type="InterPro" id="IPR002942">
    <property type="entry name" value="S4_RNA-bd"/>
</dbReference>
<dbReference type="InterPro" id="IPR036986">
    <property type="entry name" value="S4_RNA-bd_sf"/>
</dbReference>
<dbReference type="NCBIfam" id="NF003139">
    <property type="entry name" value="PRK04051.1"/>
    <property type="match status" value="1"/>
</dbReference>
<dbReference type="NCBIfam" id="TIGR01018">
    <property type="entry name" value="uS4_arch"/>
    <property type="match status" value="1"/>
</dbReference>
<dbReference type="PANTHER" id="PTHR11831">
    <property type="entry name" value="30S 40S RIBOSOMAL PROTEIN"/>
    <property type="match status" value="1"/>
</dbReference>
<dbReference type="PANTHER" id="PTHR11831:SF5">
    <property type="entry name" value="40S RIBOSOMAL PROTEIN S9"/>
    <property type="match status" value="1"/>
</dbReference>
<dbReference type="Pfam" id="PF00163">
    <property type="entry name" value="Ribosomal_S4"/>
    <property type="match status" value="1"/>
</dbReference>
<dbReference type="Pfam" id="PF01479">
    <property type="entry name" value="S4"/>
    <property type="match status" value="1"/>
</dbReference>
<dbReference type="SMART" id="SM01390">
    <property type="entry name" value="Ribosomal_S4"/>
    <property type="match status" value="1"/>
</dbReference>
<dbReference type="SUPFAM" id="SSF55174">
    <property type="entry name" value="Alpha-L RNA-binding motif"/>
    <property type="match status" value="1"/>
</dbReference>
<dbReference type="PROSITE" id="PS00632">
    <property type="entry name" value="RIBOSOMAL_S4"/>
    <property type="match status" value="1"/>
</dbReference>
<dbReference type="PROSITE" id="PS50889">
    <property type="entry name" value="S4"/>
    <property type="match status" value="1"/>
</dbReference>
<evidence type="ECO:0000250" key="1"/>
<evidence type="ECO:0000250" key="2">
    <source>
        <dbReference type="UniProtKB" id="O13516"/>
    </source>
</evidence>
<evidence type="ECO:0000255" key="3">
    <source>
        <dbReference type="PROSITE-ProRule" id="PRU00182"/>
    </source>
</evidence>
<evidence type="ECO:0000256" key="4">
    <source>
        <dbReference type="SAM" id="MobiDB-lite"/>
    </source>
</evidence>
<evidence type="ECO:0000269" key="5">
    <source>
    </source>
</evidence>
<evidence type="ECO:0000269" key="6">
    <source>
    </source>
</evidence>
<evidence type="ECO:0000305" key="7"/>
<sequence length="191" mass="22161">MPSAPRKQSKTYKVPRRPFESARLDAELKLAGEYGLRNKHEIWRVALTLSKIRRAARELLTLDEKDPKRLFEGNAIIRRLVRLGILDETRMKLDYVLALRIEDFLERRLQTQVFKLGLAKSIHHARVLIFQRHIRVGKQIVNVPSFVVRLDTQKHIDFALSSPYGGGRPGRCKRKRLRSQEGGEGEEAEEE</sequence>
<proteinExistence type="evidence at protein level"/>
<accession>Q09757</accession>
<accession>Q9URK9</accession>
<accession>Q9UTY5</accession>
<comment type="function">
    <text evidence="2">Component of the ribosome, a large ribonucleoprotein complex responsible for the synthesis of proteins in the cell. The small ribosomal subunit (SSU) binds messenger RNAs (mRNAs) and translates the encoded message by selecting cognate aminoacyl-transfer RNA (tRNA) molecules. The large subunit (LSU) contains the ribosomal catalytic site termed the peptidyl transferase center (PTC), which catalyzes the formation of peptide bonds, thereby polymerizing the amino acids delivered by tRNAs into a polypeptide chain. The nascent polypeptides leave the ribosome through a tunnel in the LSU and interact with protein factors that function in enzymatic processing, targeting, and the membrane insertion of nascent chains at the exit of the ribosomal tunnel. uS4 is involved in nucleolar processing of pre-18S ribosomal RNA and ribosome assembly.</text>
</comment>
<comment type="subunit">
    <text evidence="2">Component of the small ribosomal subunit (SSU). Mature yeast ribosomes consist of a small (40S) and a large (60S) subunit. The 40S small subunit contains 1 molecule of ribosomal RNA (18S rRNA) and at least 33 different proteins. The large 60S subunit contains 3 rRNA molecules (25S, 5.8S and 5S rRNA) and at least 46 different proteins. Interacts with snoRNA U3. uS11 interacts with MPP10. Component of the ribosomal small subunit (SSU) processome composed of at least 40 protein subunits and snoRNA U3.</text>
</comment>
<comment type="subcellular location">
    <subcellularLocation>
        <location evidence="5">Cytoplasm</location>
    </subcellularLocation>
</comment>
<comment type="miscellaneous">
    <text>There are 2 genes for uS4 in S.pombe.</text>
</comment>
<comment type="similarity">
    <text evidence="7">Belongs to the universal ribosomal protein uS4 family.</text>
</comment>
<name>RS9A_SCHPO</name>
<protein>
    <recommendedName>
        <fullName evidence="7">Small ribosomal subunit protein uS4A</fullName>
    </recommendedName>
    <alternativeName>
        <fullName>40S ribosomal protein S9-A</fullName>
    </alternativeName>
</protein>
<keyword id="KW-0963">Cytoplasm</keyword>
<keyword id="KW-0597">Phosphoprotein</keyword>
<keyword id="KW-1185">Reference proteome</keyword>
<keyword id="KW-0687">Ribonucleoprotein</keyword>
<keyword id="KW-0689">Ribosomal protein</keyword>
<keyword id="KW-0694">RNA-binding</keyword>
<keyword id="KW-0699">rRNA-binding</keyword>
<gene>
    <name type="primary">rps901</name>
    <name type="synonym">rps9a</name>
    <name type="ORF">SPAC24H6.07</name>
</gene>